<proteinExistence type="inferred from homology"/>
<sequence>MNIYDQLQAVEDRYEELGELLSDPDVVSDTKRFMELSKEEASNRDTVIAYREYKQVLQNIVDAEEMIKESGGDADLEEMAKQELKDAKAEKEEYEEKLKILLLPKDPNDDKNIILEIRGAAGGDEAALFAGDLLTMYQKYAEAQGWRFEVMEASMNGVGGFKEVVAMVSGQSVYSKLKYESGAHRVQRVPVTESQGRVHTSTATVLVMPEVEEVEYDIDPKDLRVDIYHASGAGGQNVNKVATAVRIVHLPTNIKVEMQEERTQQKNREKAMKIIRARVADHFAQIAQDEQDAERKSTIGTGDRSERIRTYNFPQNRVTDHRIGLTLQKLDTILSGKLDEVVDALVLYDQTQKLEELNK</sequence>
<keyword id="KW-0963">Cytoplasm</keyword>
<keyword id="KW-0488">Methylation</keyword>
<keyword id="KW-0648">Protein biosynthesis</keyword>
<dbReference type="EMBL" id="CP001033">
    <property type="protein sequence ID" value="ACB90250.1"/>
    <property type="molecule type" value="Genomic_DNA"/>
</dbReference>
<dbReference type="RefSeq" id="WP_001028801.1">
    <property type="nucleotide sequence ID" value="NC_010582.1"/>
</dbReference>
<dbReference type="SMR" id="B2IPH6"/>
<dbReference type="GeneID" id="45653642"/>
<dbReference type="KEGG" id="spw:SPCG_0998"/>
<dbReference type="HOGENOM" id="CLU_036856_0_1_9"/>
<dbReference type="GO" id="GO:0005737">
    <property type="term" value="C:cytoplasm"/>
    <property type="evidence" value="ECO:0007669"/>
    <property type="project" value="UniProtKB-SubCell"/>
</dbReference>
<dbReference type="GO" id="GO:0016149">
    <property type="term" value="F:translation release factor activity, codon specific"/>
    <property type="evidence" value="ECO:0007669"/>
    <property type="project" value="UniProtKB-UniRule"/>
</dbReference>
<dbReference type="FunFam" id="3.30.160.20:FF:000027">
    <property type="entry name" value="Peptide chain release factor 1"/>
    <property type="match status" value="1"/>
</dbReference>
<dbReference type="FunFam" id="3.30.70.1660:FF:000002">
    <property type="entry name" value="Peptide chain release factor 1"/>
    <property type="match status" value="1"/>
</dbReference>
<dbReference type="FunFam" id="3.30.70.1660:FF:000004">
    <property type="entry name" value="Peptide chain release factor 1"/>
    <property type="match status" value="1"/>
</dbReference>
<dbReference type="Gene3D" id="3.30.160.20">
    <property type="match status" value="1"/>
</dbReference>
<dbReference type="Gene3D" id="3.30.70.1660">
    <property type="match status" value="2"/>
</dbReference>
<dbReference type="Gene3D" id="6.10.140.1950">
    <property type="match status" value="1"/>
</dbReference>
<dbReference type="HAMAP" id="MF_00093">
    <property type="entry name" value="Rel_fac_1"/>
    <property type="match status" value="1"/>
</dbReference>
<dbReference type="InterPro" id="IPR005139">
    <property type="entry name" value="PCRF"/>
</dbReference>
<dbReference type="InterPro" id="IPR000352">
    <property type="entry name" value="Pep_chain_release_fac_I"/>
</dbReference>
<dbReference type="InterPro" id="IPR045853">
    <property type="entry name" value="Pep_chain_release_fac_I_sf"/>
</dbReference>
<dbReference type="InterPro" id="IPR050057">
    <property type="entry name" value="Prokaryotic/Mito_RF"/>
</dbReference>
<dbReference type="InterPro" id="IPR004373">
    <property type="entry name" value="RF-1"/>
</dbReference>
<dbReference type="NCBIfam" id="TIGR00019">
    <property type="entry name" value="prfA"/>
    <property type="match status" value="1"/>
</dbReference>
<dbReference type="NCBIfam" id="NF001859">
    <property type="entry name" value="PRK00591.1"/>
    <property type="match status" value="1"/>
</dbReference>
<dbReference type="PANTHER" id="PTHR43804">
    <property type="entry name" value="LD18447P"/>
    <property type="match status" value="1"/>
</dbReference>
<dbReference type="PANTHER" id="PTHR43804:SF7">
    <property type="entry name" value="LD18447P"/>
    <property type="match status" value="1"/>
</dbReference>
<dbReference type="Pfam" id="PF03462">
    <property type="entry name" value="PCRF"/>
    <property type="match status" value="1"/>
</dbReference>
<dbReference type="Pfam" id="PF00472">
    <property type="entry name" value="RF-1"/>
    <property type="match status" value="1"/>
</dbReference>
<dbReference type="SMART" id="SM00937">
    <property type="entry name" value="PCRF"/>
    <property type="match status" value="1"/>
</dbReference>
<dbReference type="SUPFAM" id="SSF75620">
    <property type="entry name" value="Release factor"/>
    <property type="match status" value="1"/>
</dbReference>
<dbReference type="PROSITE" id="PS00745">
    <property type="entry name" value="RF_PROK_I"/>
    <property type="match status" value="1"/>
</dbReference>
<organism>
    <name type="scientific">Streptococcus pneumoniae (strain CGSP14)</name>
    <dbReference type="NCBI Taxonomy" id="516950"/>
    <lineage>
        <taxon>Bacteria</taxon>
        <taxon>Bacillati</taxon>
        <taxon>Bacillota</taxon>
        <taxon>Bacilli</taxon>
        <taxon>Lactobacillales</taxon>
        <taxon>Streptococcaceae</taxon>
        <taxon>Streptococcus</taxon>
    </lineage>
</organism>
<evidence type="ECO:0000255" key="1">
    <source>
        <dbReference type="HAMAP-Rule" id="MF_00093"/>
    </source>
</evidence>
<protein>
    <recommendedName>
        <fullName evidence="1">Peptide chain release factor 1</fullName>
        <shortName evidence="1">RF-1</shortName>
    </recommendedName>
</protein>
<accession>B2IPH6</accession>
<comment type="function">
    <text evidence="1">Peptide chain release factor 1 directs the termination of translation in response to the peptide chain termination codons UAG and UAA.</text>
</comment>
<comment type="subcellular location">
    <subcellularLocation>
        <location evidence="1">Cytoplasm</location>
    </subcellularLocation>
</comment>
<comment type="PTM">
    <text evidence="1">Methylated by PrmC. Methylation increases the termination efficiency of RF1.</text>
</comment>
<comment type="similarity">
    <text evidence="1">Belongs to the prokaryotic/mitochondrial release factor family.</text>
</comment>
<name>RF1_STRPS</name>
<gene>
    <name evidence="1" type="primary">prfA</name>
    <name type="ordered locus">SPCG_0998</name>
</gene>
<feature type="chain" id="PRO_1000093513" description="Peptide chain release factor 1">
    <location>
        <begin position="1"/>
        <end position="359"/>
    </location>
</feature>
<feature type="modified residue" description="N5-methylglutamine" evidence="1">
    <location>
        <position position="236"/>
    </location>
</feature>
<reference key="1">
    <citation type="journal article" date="2009" name="BMC Genomics">
        <title>Genome evolution driven by host adaptations results in a more virulent and antimicrobial-resistant Streptococcus pneumoniae serotype 14.</title>
        <authorList>
            <person name="Ding F."/>
            <person name="Tang P."/>
            <person name="Hsu M.-H."/>
            <person name="Cui P."/>
            <person name="Hu S."/>
            <person name="Yu J."/>
            <person name="Chiu C.-H."/>
        </authorList>
    </citation>
    <scope>NUCLEOTIDE SEQUENCE [LARGE SCALE GENOMIC DNA]</scope>
    <source>
        <strain>CGSP14</strain>
    </source>
</reference>